<feature type="chain" id="PRO_0000322806" description="Holliday junction branch migration complex subunit RuvB">
    <location>
        <begin position="1"/>
        <end position="347"/>
    </location>
</feature>
<feature type="region of interest" description="Large ATPase domain (RuvB-L)" evidence="1">
    <location>
        <begin position="13"/>
        <end position="195"/>
    </location>
</feature>
<feature type="region of interest" description="Small ATPAse domain (RuvB-S)" evidence="1">
    <location>
        <begin position="196"/>
        <end position="266"/>
    </location>
</feature>
<feature type="region of interest" description="Head domain (RuvB-H)" evidence="1">
    <location>
        <begin position="269"/>
        <end position="347"/>
    </location>
</feature>
<feature type="binding site" evidence="1">
    <location>
        <position position="34"/>
    </location>
    <ligand>
        <name>ATP</name>
        <dbReference type="ChEBI" id="CHEBI:30616"/>
    </ligand>
</feature>
<feature type="binding site" evidence="1">
    <location>
        <position position="35"/>
    </location>
    <ligand>
        <name>ATP</name>
        <dbReference type="ChEBI" id="CHEBI:30616"/>
    </ligand>
</feature>
<feature type="binding site" evidence="1">
    <location>
        <position position="76"/>
    </location>
    <ligand>
        <name>ATP</name>
        <dbReference type="ChEBI" id="CHEBI:30616"/>
    </ligand>
</feature>
<feature type="binding site" evidence="1">
    <location>
        <position position="79"/>
    </location>
    <ligand>
        <name>ATP</name>
        <dbReference type="ChEBI" id="CHEBI:30616"/>
    </ligand>
</feature>
<feature type="binding site" evidence="1">
    <location>
        <position position="80"/>
    </location>
    <ligand>
        <name>ATP</name>
        <dbReference type="ChEBI" id="CHEBI:30616"/>
    </ligand>
</feature>
<feature type="binding site" evidence="1">
    <location>
        <position position="80"/>
    </location>
    <ligand>
        <name>Mg(2+)</name>
        <dbReference type="ChEBI" id="CHEBI:18420"/>
    </ligand>
</feature>
<feature type="binding site" evidence="1">
    <location>
        <position position="81"/>
    </location>
    <ligand>
        <name>ATP</name>
        <dbReference type="ChEBI" id="CHEBI:30616"/>
    </ligand>
</feature>
<feature type="binding site" evidence="1">
    <location>
        <begin position="142"/>
        <end position="144"/>
    </location>
    <ligand>
        <name>ATP</name>
        <dbReference type="ChEBI" id="CHEBI:30616"/>
    </ligand>
</feature>
<feature type="binding site" evidence="1">
    <location>
        <position position="185"/>
    </location>
    <ligand>
        <name>ATP</name>
        <dbReference type="ChEBI" id="CHEBI:30616"/>
    </ligand>
</feature>
<feature type="binding site" evidence="1">
    <location>
        <position position="195"/>
    </location>
    <ligand>
        <name>ATP</name>
        <dbReference type="ChEBI" id="CHEBI:30616"/>
    </ligand>
</feature>
<feature type="binding site" evidence="1">
    <location>
        <position position="232"/>
    </location>
    <ligand>
        <name>ATP</name>
        <dbReference type="ChEBI" id="CHEBI:30616"/>
    </ligand>
</feature>
<feature type="binding site" evidence="1">
    <location>
        <position position="329"/>
    </location>
    <ligand>
        <name>DNA</name>
        <dbReference type="ChEBI" id="CHEBI:16991"/>
    </ligand>
</feature>
<proteinExistence type="inferred from homology"/>
<comment type="function">
    <text evidence="1">The RuvA-RuvB-RuvC complex processes Holliday junction (HJ) DNA during genetic recombination and DNA repair, while the RuvA-RuvB complex plays an important role in the rescue of blocked DNA replication forks via replication fork reversal (RFR). RuvA specifically binds to HJ cruciform DNA, conferring on it an open structure. The RuvB hexamer acts as an ATP-dependent pump, pulling dsDNA into and through the RuvAB complex. RuvB forms 2 homohexamers on either side of HJ DNA bound by 1 or 2 RuvA tetramers; 4 subunits per hexamer contact DNA at a time. Coordinated motions by a converter formed by DNA-disengaged RuvB subunits stimulates ATP hydrolysis and nucleotide exchange. Immobilization of the converter enables RuvB to convert the ATP-contained energy into a lever motion, pulling 2 nucleotides of DNA out of the RuvA tetramer per ATP hydrolyzed, thus driving DNA branch migration. The RuvB motors rotate together with the DNA substrate, which together with the progressing nucleotide cycle form the mechanistic basis for DNA recombination by continuous HJ branch migration. Branch migration allows RuvC to scan DNA until it finds its consensus sequence, where it cleaves and resolves cruciform DNA.</text>
</comment>
<comment type="catalytic activity">
    <reaction evidence="1">
        <text>ATP + H2O = ADP + phosphate + H(+)</text>
        <dbReference type="Rhea" id="RHEA:13065"/>
        <dbReference type="ChEBI" id="CHEBI:15377"/>
        <dbReference type="ChEBI" id="CHEBI:15378"/>
        <dbReference type="ChEBI" id="CHEBI:30616"/>
        <dbReference type="ChEBI" id="CHEBI:43474"/>
        <dbReference type="ChEBI" id="CHEBI:456216"/>
    </reaction>
</comment>
<comment type="subunit">
    <text evidence="1">Homohexamer. Forms an RuvA(8)-RuvB(12)-Holliday junction (HJ) complex. HJ DNA is sandwiched between 2 RuvA tetramers; dsDNA enters through RuvA and exits via RuvB. An RuvB hexamer assembles on each DNA strand where it exits the tetramer. Each RuvB hexamer is contacted by two RuvA subunits (via domain III) on 2 adjacent RuvB subunits; this complex drives branch migration. In the full resolvosome a probable DNA-RuvA(4)-RuvB(12)-RuvC(2) complex forms which resolves the HJ.</text>
</comment>
<comment type="subcellular location">
    <subcellularLocation>
        <location evidence="1">Cytoplasm</location>
    </subcellularLocation>
</comment>
<comment type="domain">
    <text evidence="1">Has 3 domains, the large (RuvB-L) and small ATPase (RuvB-S) domains and the C-terminal head (RuvB-H) domain. The head domain binds DNA, while the ATPase domains jointly bind ATP, ADP or are empty depending on the state of the subunit in the translocation cycle. During a single DNA translocation step the structure of each domain remains the same, but their relative positions change.</text>
</comment>
<comment type="similarity">
    <text evidence="1">Belongs to the RuvB family.</text>
</comment>
<organism>
    <name type="scientific">Lactobacillus helveticus (strain DPC 4571)</name>
    <dbReference type="NCBI Taxonomy" id="405566"/>
    <lineage>
        <taxon>Bacteria</taxon>
        <taxon>Bacillati</taxon>
        <taxon>Bacillota</taxon>
        <taxon>Bacilli</taxon>
        <taxon>Lactobacillales</taxon>
        <taxon>Lactobacillaceae</taxon>
        <taxon>Lactobacillus</taxon>
    </lineage>
</organism>
<keyword id="KW-0067">ATP-binding</keyword>
<keyword id="KW-0963">Cytoplasm</keyword>
<keyword id="KW-0227">DNA damage</keyword>
<keyword id="KW-0233">DNA recombination</keyword>
<keyword id="KW-0234">DNA repair</keyword>
<keyword id="KW-0238">DNA-binding</keyword>
<keyword id="KW-0378">Hydrolase</keyword>
<keyword id="KW-0547">Nucleotide-binding</keyword>
<evidence type="ECO:0000255" key="1">
    <source>
        <dbReference type="HAMAP-Rule" id="MF_00016"/>
    </source>
</evidence>
<dbReference type="EC" id="3.6.4.-" evidence="1"/>
<dbReference type="EMBL" id="CP000517">
    <property type="protein sequence ID" value="ABX26638.1"/>
    <property type="molecule type" value="Genomic_DNA"/>
</dbReference>
<dbReference type="SMR" id="A8YTI2"/>
<dbReference type="KEGG" id="lhe:lhv_0430"/>
<dbReference type="eggNOG" id="COG2255">
    <property type="taxonomic scope" value="Bacteria"/>
</dbReference>
<dbReference type="HOGENOM" id="CLU_055599_1_0_9"/>
<dbReference type="Proteomes" id="UP000000790">
    <property type="component" value="Chromosome"/>
</dbReference>
<dbReference type="GO" id="GO:0005737">
    <property type="term" value="C:cytoplasm"/>
    <property type="evidence" value="ECO:0007669"/>
    <property type="project" value="UniProtKB-SubCell"/>
</dbReference>
<dbReference type="GO" id="GO:0048476">
    <property type="term" value="C:Holliday junction resolvase complex"/>
    <property type="evidence" value="ECO:0007669"/>
    <property type="project" value="UniProtKB-UniRule"/>
</dbReference>
<dbReference type="GO" id="GO:0005524">
    <property type="term" value="F:ATP binding"/>
    <property type="evidence" value="ECO:0007669"/>
    <property type="project" value="UniProtKB-UniRule"/>
</dbReference>
<dbReference type="GO" id="GO:0016887">
    <property type="term" value="F:ATP hydrolysis activity"/>
    <property type="evidence" value="ECO:0007669"/>
    <property type="project" value="InterPro"/>
</dbReference>
<dbReference type="GO" id="GO:0000400">
    <property type="term" value="F:four-way junction DNA binding"/>
    <property type="evidence" value="ECO:0007669"/>
    <property type="project" value="UniProtKB-UniRule"/>
</dbReference>
<dbReference type="GO" id="GO:0009378">
    <property type="term" value="F:four-way junction helicase activity"/>
    <property type="evidence" value="ECO:0007669"/>
    <property type="project" value="InterPro"/>
</dbReference>
<dbReference type="GO" id="GO:0006310">
    <property type="term" value="P:DNA recombination"/>
    <property type="evidence" value="ECO:0007669"/>
    <property type="project" value="UniProtKB-UniRule"/>
</dbReference>
<dbReference type="GO" id="GO:0006281">
    <property type="term" value="P:DNA repair"/>
    <property type="evidence" value="ECO:0007669"/>
    <property type="project" value="UniProtKB-UniRule"/>
</dbReference>
<dbReference type="CDD" id="cd00009">
    <property type="entry name" value="AAA"/>
    <property type="match status" value="1"/>
</dbReference>
<dbReference type="Gene3D" id="1.10.8.60">
    <property type="match status" value="1"/>
</dbReference>
<dbReference type="Gene3D" id="3.40.50.300">
    <property type="entry name" value="P-loop containing nucleotide triphosphate hydrolases"/>
    <property type="match status" value="1"/>
</dbReference>
<dbReference type="Gene3D" id="1.10.10.10">
    <property type="entry name" value="Winged helix-like DNA-binding domain superfamily/Winged helix DNA-binding domain"/>
    <property type="match status" value="1"/>
</dbReference>
<dbReference type="HAMAP" id="MF_00016">
    <property type="entry name" value="DNA_HJ_migration_RuvB"/>
    <property type="match status" value="1"/>
</dbReference>
<dbReference type="InterPro" id="IPR003593">
    <property type="entry name" value="AAA+_ATPase"/>
</dbReference>
<dbReference type="InterPro" id="IPR041445">
    <property type="entry name" value="AAA_lid_4"/>
</dbReference>
<dbReference type="InterPro" id="IPR004605">
    <property type="entry name" value="DNA_helicase_Holl-junc_RuvB"/>
</dbReference>
<dbReference type="InterPro" id="IPR027417">
    <property type="entry name" value="P-loop_NTPase"/>
</dbReference>
<dbReference type="InterPro" id="IPR008824">
    <property type="entry name" value="RuvB-like_N"/>
</dbReference>
<dbReference type="InterPro" id="IPR008823">
    <property type="entry name" value="RuvB_C"/>
</dbReference>
<dbReference type="InterPro" id="IPR036388">
    <property type="entry name" value="WH-like_DNA-bd_sf"/>
</dbReference>
<dbReference type="InterPro" id="IPR036390">
    <property type="entry name" value="WH_DNA-bd_sf"/>
</dbReference>
<dbReference type="NCBIfam" id="NF000868">
    <property type="entry name" value="PRK00080.1"/>
    <property type="match status" value="1"/>
</dbReference>
<dbReference type="NCBIfam" id="TIGR00635">
    <property type="entry name" value="ruvB"/>
    <property type="match status" value="1"/>
</dbReference>
<dbReference type="PANTHER" id="PTHR42848">
    <property type="match status" value="1"/>
</dbReference>
<dbReference type="PANTHER" id="PTHR42848:SF1">
    <property type="entry name" value="HOLLIDAY JUNCTION BRANCH MIGRATION COMPLEX SUBUNIT RUVB"/>
    <property type="match status" value="1"/>
</dbReference>
<dbReference type="Pfam" id="PF17864">
    <property type="entry name" value="AAA_lid_4"/>
    <property type="match status" value="1"/>
</dbReference>
<dbReference type="Pfam" id="PF05491">
    <property type="entry name" value="RuvB_C"/>
    <property type="match status" value="1"/>
</dbReference>
<dbReference type="Pfam" id="PF05496">
    <property type="entry name" value="RuvB_N"/>
    <property type="match status" value="1"/>
</dbReference>
<dbReference type="SMART" id="SM00382">
    <property type="entry name" value="AAA"/>
    <property type="match status" value="1"/>
</dbReference>
<dbReference type="SUPFAM" id="SSF52540">
    <property type="entry name" value="P-loop containing nucleoside triphosphate hydrolases"/>
    <property type="match status" value="1"/>
</dbReference>
<dbReference type="SUPFAM" id="SSF46785">
    <property type="entry name" value="Winged helix' DNA-binding domain"/>
    <property type="match status" value="1"/>
</dbReference>
<accession>A8YTI2</accession>
<sequence>MIISKEVKLVVENEDAVTSGEVENSEEEAMELSLRPQTLDQYLGQKRVKKEMSIYIKAAKQRDEALDHVLLYGPPGLGKTTLAFVIANELGVHLKSTSGPAIEKAGDLVALLSDLDPGDVLFIDEIHRLAKPVEEVLYSAMEDYYIDIVIGEGQTTHAVHVPLPPFTLIGATTLAGQLSAPLRDRFGIVEHMQYYTIDELEKIVQRSSDVFHTSIAPEAAHELARRSRGTPRVANRFLKRVRDFAEVKGEKTISLATTEGALKQLQVDDEGLDQTDRRLLRTMIEGYNGGPVGIRTLAANVGEDMETIESLYEPYLLQHGFILLGPRGRMVTDKAYLQLGLPVPGDK</sequence>
<protein>
    <recommendedName>
        <fullName evidence="1">Holliday junction branch migration complex subunit RuvB</fullName>
        <ecNumber evidence="1">3.6.4.-</ecNumber>
    </recommendedName>
</protein>
<reference key="1">
    <citation type="journal article" date="2008" name="J. Bacteriol.">
        <title>Genome sequence of Lactobacillus helveticus: an organism distinguished by selective gene loss and IS element expansion.</title>
        <authorList>
            <person name="Callanan M."/>
            <person name="Kaleta P."/>
            <person name="O'Callaghan J."/>
            <person name="O'Sullivan O."/>
            <person name="Jordan K."/>
            <person name="McAuliffe O."/>
            <person name="Sangrador-Vegas A."/>
            <person name="Slattery L."/>
            <person name="Fitzgerald G.F."/>
            <person name="Beresford T."/>
            <person name="Ross R.P."/>
        </authorList>
    </citation>
    <scope>NUCLEOTIDE SEQUENCE [LARGE SCALE GENOMIC DNA]</scope>
    <source>
        <strain>DPC 4571</strain>
    </source>
</reference>
<gene>
    <name evidence="1" type="primary">ruvB</name>
    <name type="ordered locus">lhv_0430</name>
</gene>
<name>RUVB_LACH4</name>